<accession>Q7MGR5</accession>
<keyword id="KW-0678">Repressor</keyword>
<keyword id="KW-0687">Ribonucleoprotein</keyword>
<keyword id="KW-0689">Ribosomal protein</keyword>
<keyword id="KW-0694">RNA-binding</keyword>
<keyword id="KW-0699">rRNA-binding</keyword>
<keyword id="KW-0810">Translation regulation</keyword>
<keyword id="KW-0820">tRNA-binding</keyword>
<organism>
    <name type="scientific">Vibrio vulnificus (strain YJ016)</name>
    <dbReference type="NCBI Taxonomy" id="196600"/>
    <lineage>
        <taxon>Bacteria</taxon>
        <taxon>Pseudomonadati</taxon>
        <taxon>Pseudomonadota</taxon>
        <taxon>Gammaproteobacteria</taxon>
        <taxon>Vibrionales</taxon>
        <taxon>Vibrionaceae</taxon>
        <taxon>Vibrio</taxon>
    </lineage>
</organism>
<feature type="chain" id="PRO_0000125775" description="Large ribosomal subunit protein uL1">
    <location>
        <begin position="1"/>
        <end position="233"/>
    </location>
</feature>
<gene>
    <name evidence="1" type="primary">rplA</name>
    <name type="ordered locus">VV3162</name>
</gene>
<dbReference type="EMBL" id="BA000037">
    <property type="protein sequence ID" value="BAC95926.1"/>
    <property type="molecule type" value="Genomic_DNA"/>
</dbReference>
<dbReference type="RefSeq" id="WP_011079198.1">
    <property type="nucleotide sequence ID" value="NC_005139.1"/>
</dbReference>
<dbReference type="SMR" id="Q7MGR5"/>
<dbReference type="STRING" id="672.VV93_v1c28790"/>
<dbReference type="KEGG" id="vvy:VV3162"/>
<dbReference type="eggNOG" id="COG0081">
    <property type="taxonomic scope" value="Bacteria"/>
</dbReference>
<dbReference type="HOGENOM" id="CLU_062853_0_0_6"/>
<dbReference type="Proteomes" id="UP000002675">
    <property type="component" value="Chromosome I"/>
</dbReference>
<dbReference type="GO" id="GO:0022625">
    <property type="term" value="C:cytosolic large ribosomal subunit"/>
    <property type="evidence" value="ECO:0007669"/>
    <property type="project" value="TreeGrafter"/>
</dbReference>
<dbReference type="GO" id="GO:0019843">
    <property type="term" value="F:rRNA binding"/>
    <property type="evidence" value="ECO:0007669"/>
    <property type="project" value="UniProtKB-UniRule"/>
</dbReference>
<dbReference type="GO" id="GO:0003735">
    <property type="term" value="F:structural constituent of ribosome"/>
    <property type="evidence" value="ECO:0007669"/>
    <property type="project" value="InterPro"/>
</dbReference>
<dbReference type="GO" id="GO:0000049">
    <property type="term" value="F:tRNA binding"/>
    <property type="evidence" value="ECO:0007669"/>
    <property type="project" value="UniProtKB-KW"/>
</dbReference>
<dbReference type="GO" id="GO:0006417">
    <property type="term" value="P:regulation of translation"/>
    <property type="evidence" value="ECO:0007669"/>
    <property type="project" value="UniProtKB-KW"/>
</dbReference>
<dbReference type="GO" id="GO:0006412">
    <property type="term" value="P:translation"/>
    <property type="evidence" value="ECO:0007669"/>
    <property type="project" value="UniProtKB-UniRule"/>
</dbReference>
<dbReference type="CDD" id="cd00403">
    <property type="entry name" value="Ribosomal_L1"/>
    <property type="match status" value="1"/>
</dbReference>
<dbReference type="FunFam" id="3.40.50.790:FF:000001">
    <property type="entry name" value="50S ribosomal protein L1"/>
    <property type="match status" value="1"/>
</dbReference>
<dbReference type="Gene3D" id="3.30.190.20">
    <property type="match status" value="1"/>
</dbReference>
<dbReference type="Gene3D" id="3.40.50.790">
    <property type="match status" value="1"/>
</dbReference>
<dbReference type="HAMAP" id="MF_01318_B">
    <property type="entry name" value="Ribosomal_uL1_B"/>
    <property type="match status" value="1"/>
</dbReference>
<dbReference type="InterPro" id="IPR005878">
    <property type="entry name" value="Ribosom_uL1_bac-type"/>
</dbReference>
<dbReference type="InterPro" id="IPR002143">
    <property type="entry name" value="Ribosomal_uL1"/>
</dbReference>
<dbReference type="InterPro" id="IPR023674">
    <property type="entry name" value="Ribosomal_uL1-like"/>
</dbReference>
<dbReference type="InterPro" id="IPR028364">
    <property type="entry name" value="Ribosomal_uL1/biogenesis"/>
</dbReference>
<dbReference type="InterPro" id="IPR016095">
    <property type="entry name" value="Ribosomal_uL1_3-a/b-sand"/>
</dbReference>
<dbReference type="InterPro" id="IPR023673">
    <property type="entry name" value="Ribosomal_uL1_CS"/>
</dbReference>
<dbReference type="NCBIfam" id="TIGR01169">
    <property type="entry name" value="rplA_bact"/>
    <property type="match status" value="1"/>
</dbReference>
<dbReference type="PANTHER" id="PTHR36427">
    <property type="entry name" value="54S RIBOSOMAL PROTEIN L1, MITOCHONDRIAL"/>
    <property type="match status" value="1"/>
</dbReference>
<dbReference type="PANTHER" id="PTHR36427:SF3">
    <property type="entry name" value="LARGE RIBOSOMAL SUBUNIT PROTEIN UL1M"/>
    <property type="match status" value="1"/>
</dbReference>
<dbReference type="Pfam" id="PF00687">
    <property type="entry name" value="Ribosomal_L1"/>
    <property type="match status" value="1"/>
</dbReference>
<dbReference type="PIRSF" id="PIRSF002155">
    <property type="entry name" value="Ribosomal_L1"/>
    <property type="match status" value="1"/>
</dbReference>
<dbReference type="SUPFAM" id="SSF56808">
    <property type="entry name" value="Ribosomal protein L1"/>
    <property type="match status" value="1"/>
</dbReference>
<dbReference type="PROSITE" id="PS01199">
    <property type="entry name" value="RIBOSOMAL_L1"/>
    <property type="match status" value="1"/>
</dbReference>
<comment type="function">
    <text evidence="1">Binds directly to 23S rRNA. The L1 stalk is quite mobile in the ribosome, and is involved in E site tRNA release.</text>
</comment>
<comment type="function">
    <text evidence="1">Protein L1 is also a translational repressor protein, it controls the translation of the L11 operon by binding to its mRNA.</text>
</comment>
<comment type="subunit">
    <text evidence="1">Part of the 50S ribosomal subunit.</text>
</comment>
<comment type="similarity">
    <text evidence="1">Belongs to the universal ribosomal protein uL1 family.</text>
</comment>
<name>RL1_VIBVY</name>
<sequence>MAKLTKRMRVIREKVDVTREYEINEAVALLKELATAKFVESVDVAVNLGIDARKSDQNVRGATVLPHGTGRDIRVAVFAQGANAEAAKEAGADIVGMEDLAEQVKKGEMNFDVVVASPDAMRVVGQLGTILGPRGLMPNPKVGTVTPNVAEAVKNAKAGQVRYRNDKNGIIHTTIGKVDFSAEQIKENLEALLVALKKAKPSSAKGSYLKKVSISTTMGAGVAVDQGTLNTQA</sequence>
<reference key="1">
    <citation type="journal article" date="2003" name="Genome Res.">
        <title>Comparative genome analysis of Vibrio vulnificus, a marine pathogen.</title>
        <authorList>
            <person name="Chen C.-Y."/>
            <person name="Wu K.-M."/>
            <person name="Chang Y.-C."/>
            <person name="Chang C.-H."/>
            <person name="Tsai H.-C."/>
            <person name="Liao T.-L."/>
            <person name="Liu Y.-M."/>
            <person name="Chen H.-J."/>
            <person name="Shen A.B.-T."/>
            <person name="Li J.-C."/>
            <person name="Su T.-L."/>
            <person name="Shao C.-P."/>
            <person name="Lee C.-T."/>
            <person name="Hor L.-I."/>
            <person name="Tsai S.-F."/>
        </authorList>
    </citation>
    <scope>NUCLEOTIDE SEQUENCE [LARGE SCALE GENOMIC DNA]</scope>
    <source>
        <strain>YJ016</strain>
    </source>
</reference>
<proteinExistence type="inferred from homology"/>
<protein>
    <recommendedName>
        <fullName evidence="1">Large ribosomal subunit protein uL1</fullName>
    </recommendedName>
    <alternativeName>
        <fullName evidence="2">50S ribosomal protein L1</fullName>
    </alternativeName>
</protein>
<evidence type="ECO:0000255" key="1">
    <source>
        <dbReference type="HAMAP-Rule" id="MF_01318"/>
    </source>
</evidence>
<evidence type="ECO:0000305" key="2"/>